<feature type="chain" id="PRO_0000083915" description="Major basic nuclear protein 1">
    <location>
        <begin position="1"/>
        <end position="113"/>
    </location>
</feature>
<feature type="region of interest" description="Disordered" evidence="1">
    <location>
        <begin position="1"/>
        <end position="20"/>
    </location>
</feature>
<gene>
    <name type="primary">HCc1</name>
</gene>
<protein>
    <recommendedName>
        <fullName>Major basic nuclear protein 1</fullName>
    </recommendedName>
    <alternativeName>
        <fullName>Protein p14 alpha/beta chain</fullName>
    </alternativeName>
</protein>
<organism>
    <name type="scientific">Crypthecodinium cohnii</name>
    <name type="common">Dinoflagellate</name>
    <name type="synonym">Glenodinium cohnii</name>
    <dbReference type="NCBI Taxonomy" id="2866"/>
    <lineage>
        <taxon>Eukaryota</taxon>
        <taxon>Sar</taxon>
        <taxon>Alveolata</taxon>
        <taxon>Dinophyceae</taxon>
        <taxon>Gonyaulacales</taxon>
        <taxon>Crypthecodiniaceae</taxon>
        <taxon>Crypthecodinium</taxon>
    </lineage>
</organism>
<name>HCC1_CRYCO</name>
<proteinExistence type="predicted"/>
<sequence>MAPKMKAAMKAMKAPAMKGKAMTKTGLAEAWRRRPSFLRRTAGQSWRAWPRSCAAEVKKTGKLTIPGLVMVKTRKKPATKAGKREMFGKVVLVKASCQDVVKAYPVKALKTDF</sequence>
<dbReference type="EMBL" id="X58443">
    <property type="protein sequence ID" value="CAA41349.1"/>
    <property type="molecule type" value="mRNA"/>
</dbReference>
<dbReference type="PIR" id="A56581">
    <property type="entry name" value="A56581"/>
</dbReference>
<dbReference type="SMR" id="Q01239"/>
<dbReference type="GO" id="GO:0005634">
    <property type="term" value="C:nucleus"/>
    <property type="evidence" value="ECO:0007669"/>
    <property type="project" value="UniProtKB-SubCell"/>
</dbReference>
<dbReference type="GO" id="GO:0003677">
    <property type="term" value="F:DNA binding"/>
    <property type="evidence" value="ECO:0007669"/>
    <property type="project" value="UniProtKB-KW"/>
</dbReference>
<dbReference type="Gene3D" id="4.10.520.10">
    <property type="entry name" value="IHF-like DNA-binding proteins"/>
    <property type="match status" value="1"/>
</dbReference>
<dbReference type="InterPro" id="IPR010992">
    <property type="entry name" value="IHF-like_DNA-bd_dom_sf"/>
</dbReference>
<dbReference type="SUPFAM" id="SSF47729">
    <property type="entry name" value="IHF-like DNA-binding proteins"/>
    <property type="match status" value="1"/>
</dbReference>
<reference key="1">
    <citation type="journal article" date="1991" name="Chromosoma">
        <title>Molecular cloning and immunolocalization of two variants of the major basic nuclear protein (HCc) from the histone-less eukaryote Crypthecodinium cohnii (Pyrrhophyta).</title>
        <authorList>
            <person name="Sala-Rovira M."/>
            <person name="Geraud M.L."/>
            <person name="Caput D."/>
            <person name="Jacques F."/>
            <person name="Soyer-Gobillard M.O."/>
            <person name="Vernet G."/>
            <person name="Herzog M."/>
        </authorList>
    </citation>
    <scope>NUCLEOTIDE SEQUENCE [MRNA]</scope>
    <source>
        <strain>WHd</strain>
    </source>
</reference>
<evidence type="ECO:0000256" key="1">
    <source>
        <dbReference type="SAM" id="MobiDB-lite"/>
    </source>
</evidence>
<comment type="subcellular location">
    <subcellularLocation>
        <location>Nucleus</location>
    </subcellularLocation>
</comment>
<keyword id="KW-0238">DNA-binding</keyword>
<keyword id="KW-0539">Nucleus</keyword>
<accession>Q01239</accession>